<name>RS12_SALTI</name>
<dbReference type="EMBL" id="AL513382">
    <property type="protein sequence ID" value="CAD08165.1"/>
    <property type="molecule type" value="Genomic_DNA"/>
</dbReference>
<dbReference type="EMBL" id="AE014613">
    <property type="protein sequence ID" value="AAO71524.1"/>
    <property type="molecule type" value="Genomic_DNA"/>
</dbReference>
<dbReference type="RefSeq" id="NP_458452.1">
    <property type="nucleotide sequence ID" value="NC_003198.1"/>
</dbReference>
<dbReference type="RefSeq" id="WP_000246815.1">
    <property type="nucleotide sequence ID" value="NZ_WSUR01000001.1"/>
</dbReference>
<dbReference type="SMR" id="P0A7S7"/>
<dbReference type="STRING" id="220341.gene:17588178"/>
<dbReference type="GeneID" id="98390450"/>
<dbReference type="KEGG" id="stt:t4057"/>
<dbReference type="KEGG" id="sty:STY4350"/>
<dbReference type="PATRIC" id="fig|220341.7.peg.4445"/>
<dbReference type="eggNOG" id="COG0048">
    <property type="taxonomic scope" value="Bacteria"/>
</dbReference>
<dbReference type="HOGENOM" id="CLU_104295_1_2_6"/>
<dbReference type="OMA" id="VCIRVYT"/>
<dbReference type="OrthoDB" id="9802366at2"/>
<dbReference type="Proteomes" id="UP000000541">
    <property type="component" value="Chromosome"/>
</dbReference>
<dbReference type="Proteomes" id="UP000002670">
    <property type="component" value="Chromosome"/>
</dbReference>
<dbReference type="GO" id="GO:0015935">
    <property type="term" value="C:small ribosomal subunit"/>
    <property type="evidence" value="ECO:0007669"/>
    <property type="project" value="InterPro"/>
</dbReference>
<dbReference type="GO" id="GO:0019843">
    <property type="term" value="F:rRNA binding"/>
    <property type="evidence" value="ECO:0007669"/>
    <property type="project" value="UniProtKB-UniRule"/>
</dbReference>
<dbReference type="GO" id="GO:0003735">
    <property type="term" value="F:structural constituent of ribosome"/>
    <property type="evidence" value="ECO:0007669"/>
    <property type="project" value="InterPro"/>
</dbReference>
<dbReference type="GO" id="GO:0000049">
    <property type="term" value="F:tRNA binding"/>
    <property type="evidence" value="ECO:0007669"/>
    <property type="project" value="UniProtKB-UniRule"/>
</dbReference>
<dbReference type="GO" id="GO:0006412">
    <property type="term" value="P:translation"/>
    <property type="evidence" value="ECO:0007669"/>
    <property type="project" value="UniProtKB-UniRule"/>
</dbReference>
<dbReference type="CDD" id="cd03368">
    <property type="entry name" value="Ribosomal_S12"/>
    <property type="match status" value="1"/>
</dbReference>
<dbReference type="FunFam" id="2.40.50.140:FF:000001">
    <property type="entry name" value="30S ribosomal protein S12"/>
    <property type="match status" value="1"/>
</dbReference>
<dbReference type="Gene3D" id="2.40.50.140">
    <property type="entry name" value="Nucleic acid-binding proteins"/>
    <property type="match status" value="1"/>
</dbReference>
<dbReference type="HAMAP" id="MF_00403_B">
    <property type="entry name" value="Ribosomal_uS12_B"/>
    <property type="match status" value="1"/>
</dbReference>
<dbReference type="InterPro" id="IPR012340">
    <property type="entry name" value="NA-bd_OB-fold"/>
</dbReference>
<dbReference type="InterPro" id="IPR006032">
    <property type="entry name" value="Ribosomal_uS12"/>
</dbReference>
<dbReference type="InterPro" id="IPR005679">
    <property type="entry name" value="Ribosomal_uS12_bac"/>
</dbReference>
<dbReference type="NCBIfam" id="TIGR00981">
    <property type="entry name" value="rpsL_bact"/>
    <property type="match status" value="1"/>
</dbReference>
<dbReference type="PANTHER" id="PTHR11652">
    <property type="entry name" value="30S RIBOSOMAL PROTEIN S12 FAMILY MEMBER"/>
    <property type="match status" value="1"/>
</dbReference>
<dbReference type="Pfam" id="PF00164">
    <property type="entry name" value="Ribosom_S12_S23"/>
    <property type="match status" value="1"/>
</dbReference>
<dbReference type="PIRSF" id="PIRSF002133">
    <property type="entry name" value="Ribosomal_S12/S23"/>
    <property type="match status" value="1"/>
</dbReference>
<dbReference type="PRINTS" id="PR01034">
    <property type="entry name" value="RIBOSOMALS12"/>
</dbReference>
<dbReference type="SUPFAM" id="SSF50249">
    <property type="entry name" value="Nucleic acid-binding proteins"/>
    <property type="match status" value="1"/>
</dbReference>
<dbReference type="PROSITE" id="PS00055">
    <property type="entry name" value="RIBOSOMAL_S12"/>
    <property type="match status" value="1"/>
</dbReference>
<accession>P0A7S7</accession>
<accession>P02367</accession>
<accession>Q9F5N3</accession>
<protein>
    <recommendedName>
        <fullName evidence="2">Small ribosomal subunit protein uS12</fullName>
    </recommendedName>
    <alternativeName>
        <fullName>30S ribosomal protein S12</fullName>
    </alternativeName>
</protein>
<keyword id="KW-0488">Methylation</keyword>
<keyword id="KW-0687">Ribonucleoprotein</keyword>
<keyword id="KW-0689">Ribosomal protein</keyword>
<keyword id="KW-0694">RNA-binding</keyword>
<keyword id="KW-0699">rRNA-binding</keyword>
<keyword id="KW-0820">tRNA-binding</keyword>
<organism>
    <name type="scientific">Salmonella typhi</name>
    <dbReference type="NCBI Taxonomy" id="90370"/>
    <lineage>
        <taxon>Bacteria</taxon>
        <taxon>Pseudomonadati</taxon>
        <taxon>Pseudomonadota</taxon>
        <taxon>Gammaproteobacteria</taxon>
        <taxon>Enterobacterales</taxon>
        <taxon>Enterobacteriaceae</taxon>
        <taxon>Salmonella</taxon>
    </lineage>
</organism>
<comment type="function">
    <text>With S4 and S5 plays an important role in translational accuracy.</text>
</comment>
<comment type="function">
    <text evidence="1">Interacts with and stabilizes bases of the 16S rRNA that are involved in tRNA selection in the A site and with the mRNA backbone. Located at the interface of the 30S and 50S subunits, it traverses the body of the 30S subunit contacting proteins on the other side and probably holding the rRNA structure together. The combined cluster of proteins S8, S12 and S17 appears to hold together the shoulder and platform of the 30S subunit (By similarity).</text>
</comment>
<comment type="subunit">
    <text evidence="1">Part of the 30S ribosomal subunit. Contacts proteins S8 and S17. May interact with IF1 in the 30S initiation complex (By similarity).</text>
</comment>
<comment type="similarity">
    <text evidence="2">Belongs to the universal ribosomal protein uS12 family.</text>
</comment>
<gene>
    <name type="primary">rpsL</name>
    <name type="synonym">strA</name>
    <name type="ordered locus">STY4350</name>
    <name type="ordered locus">t4057</name>
</gene>
<sequence>MATVNQLVRKPRARKVAKSNVPALEACPQKRGVCTRVYTTTPKKPNSALRKVCRVRLTNGFEVTSYIGGEGHNLQEHSVILIRGGRVKDLPGVRYHTVRGALDCSGVKDRKQARSKYGVKRPKA</sequence>
<proteinExistence type="inferred from homology"/>
<reference key="1">
    <citation type="journal article" date="2001" name="Nature">
        <title>Complete genome sequence of a multiple drug resistant Salmonella enterica serovar Typhi CT18.</title>
        <authorList>
            <person name="Parkhill J."/>
            <person name="Dougan G."/>
            <person name="James K.D."/>
            <person name="Thomson N.R."/>
            <person name="Pickard D."/>
            <person name="Wain J."/>
            <person name="Churcher C.M."/>
            <person name="Mungall K.L."/>
            <person name="Bentley S.D."/>
            <person name="Holden M.T.G."/>
            <person name="Sebaihia M."/>
            <person name="Baker S."/>
            <person name="Basham D."/>
            <person name="Brooks K."/>
            <person name="Chillingworth T."/>
            <person name="Connerton P."/>
            <person name="Cronin A."/>
            <person name="Davis P."/>
            <person name="Davies R.M."/>
            <person name="Dowd L."/>
            <person name="White N."/>
            <person name="Farrar J."/>
            <person name="Feltwell T."/>
            <person name="Hamlin N."/>
            <person name="Haque A."/>
            <person name="Hien T.T."/>
            <person name="Holroyd S."/>
            <person name="Jagels K."/>
            <person name="Krogh A."/>
            <person name="Larsen T.S."/>
            <person name="Leather S."/>
            <person name="Moule S."/>
            <person name="O'Gaora P."/>
            <person name="Parry C."/>
            <person name="Quail M.A."/>
            <person name="Rutherford K.M."/>
            <person name="Simmonds M."/>
            <person name="Skelton J."/>
            <person name="Stevens K."/>
            <person name="Whitehead S."/>
            <person name="Barrell B.G."/>
        </authorList>
    </citation>
    <scope>NUCLEOTIDE SEQUENCE [LARGE SCALE GENOMIC DNA]</scope>
    <source>
        <strain>CT18</strain>
    </source>
</reference>
<reference key="2">
    <citation type="journal article" date="2003" name="J. Bacteriol.">
        <title>Comparative genomics of Salmonella enterica serovar Typhi strains Ty2 and CT18.</title>
        <authorList>
            <person name="Deng W."/>
            <person name="Liou S.-R."/>
            <person name="Plunkett G. III"/>
            <person name="Mayhew G.F."/>
            <person name="Rose D.J."/>
            <person name="Burland V."/>
            <person name="Kodoyianni V."/>
            <person name="Schwartz D.C."/>
            <person name="Blattner F.R."/>
        </authorList>
    </citation>
    <scope>NUCLEOTIDE SEQUENCE [LARGE SCALE GENOMIC DNA]</scope>
    <source>
        <strain>ATCC 700931 / Ty2</strain>
    </source>
</reference>
<feature type="initiator methionine" description="Removed" evidence="1">
    <location>
        <position position="1"/>
    </location>
</feature>
<feature type="chain" id="PRO_0000146302" description="Small ribosomal subunit protein uS12">
    <location>
        <begin position="2"/>
        <end position="124"/>
    </location>
</feature>
<feature type="modified residue" description="3-methylthioaspartic acid" evidence="1">
    <location>
        <position position="89"/>
    </location>
</feature>
<evidence type="ECO:0000250" key="1"/>
<evidence type="ECO:0000305" key="2"/>